<reference key="1">
    <citation type="journal article" date="2009" name="PLoS Pathog.">
        <title>Genomic evidence for the evolution of Streptococcus equi: host restriction, increased virulence, and genetic exchange with human pathogens.</title>
        <authorList>
            <person name="Holden M.T.G."/>
            <person name="Heather Z."/>
            <person name="Paillot R."/>
            <person name="Steward K.F."/>
            <person name="Webb K."/>
            <person name="Ainslie F."/>
            <person name="Jourdan T."/>
            <person name="Bason N.C."/>
            <person name="Holroyd N.E."/>
            <person name="Mungall K."/>
            <person name="Quail M.A."/>
            <person name="Sanders M."/>
            <person name="Simmonds M."/>
            <person name="Willey D."/>
            <person name="Brooks K."/>
            <person name="Aanensen D.M."/>
            <person name="Spratt B.G."/>
            <person name="Jolley K.A."/>
            <person name="Maiden M.C.J."/>
            <person name="Kehoe M."/>
            <person name="Chanter N."/>
            <person name="Bentley S.D."/>
            <person name="Robinson C."/>
            <person name="Maskell D.J."/>
            <person name="Parkhill J."/>
            <person name="Waller A.S."/>
        </authorList>
    </citation>
    <scope>NUCLEOTIDE SEQUENCE [LARGE SCALE GENOMIC DNA]</scope>
    <source>
        <strain>4047</strain>
    </source>
</reference>
<gene>
    <name evidence="1" type="primary">truA</name>
    <name type="ordered locus">SEQ_1954</name>
</gene>
<proteinExistence type="inferred from homology"/>
<keyword id="KW-0413">Isomerase</keyword>
<keyword id="KW-0819">tRNA processing</keyword>
<feature type="chain" id="PRO_1000194570" description="tRNA pseudouridine synthase A">
    <location>
        <begin position="1"/>
        <end position="249"/>
    </location>
</feature>
<feature type="active site" description="Nucleophile" evidence="1">
    <location>
        <position position="53"/>
    </location>
</feature>
<feature type="binding site" evidence="1">
    <location>
        <position position="111"/>
    </location>
    <ligand>
        <name>substrate</name>
    </ligand>
</feature>
<organism>
    <name type="scientific">Streptococcus equi subsp. equi (strain 4047)</name>
    <dbReference type="NCBI Taxonomy" id="553482"/>
    <lineage>
        <taxon>Bacteria</taxon>
        <taxon>Bacillati</taxon>
        <taxon>Bacillota</taxon>
        <taxon>Bacilli</taxon>
        <taxon>Lactobacillales</taxon>
        <taxon>Streptococcaceae</taxon>
        <taxon>Streptococcus</taxon>
    </lineage>
</organism>
<sequence>MTRYKAIISYDGTLFSGFQRQSQARTVQEEIEKTLQKLTGGQGIQIHGAGRTDAGVHAYGQVIHFDLEQKRDPEKLRFALDTQTPDDIDVISLEIAADDFHARYHKHFKTYEFLVDIGRPKNPMMRHYATHYPYPLDIAKMQAAIKDLVGTHDFTGFTAAGTSVKNKVRTITAATLTQDPKTGFLVFTFSGNGFLYKQVRNMVGTLLKIGNGRLPIEQIRLVLESKNRQLAGPTAAGNGLYLKEIIYEE</sequence>
<accession>C0M8L4</accession>
<protein>
    <recommendedName>
        <fullName evidence="1">tRNA pseudouridine synthase A</fullName>
        <ecNumber evidence="1">5.4.99.12</ecNumber>
    </recommendedName>
    <alternativeName>
        <fullName evidence="1">tRNA pseudouridine(38-40) synthase</fullName>
    </alternativeName>
    <alternativeName>
        <fullName evidence="1">tRNA pseudouridylate synthase I</fullName>
    </alternativeName>
    <alternativeName>
        <fullName evidence="1">tRNA-uridine isomerase I</fullName>
    </alternativeName>
</protein>
<comment type="function">
    <text evidence="1">Formation of pseudouridine at positions 38, 39 and 40 in the anticodon stem and loop of transfer RNAs.</text>
</comment>
<comment type="catalytic activity">
    <reaction evidence="1">
        <text>uridine(38/39/40) in tRNA = pseudouridine(38/39/40) in tRNA</text>
        <dbReference type="Rhea" id="RHEA:22376"/>
        <dbReference type="Rhea" id="RHEA-COMP:10085"/>
        <dbReference type="Rhea" id="RHEA-COMP:10087"/>
        <dbReference type="ChEBI" id="CHEBI:65314"/>
        <dbReference type="ChEBI" id="CHEBI:65315"/>
        <dbReference type="EC" id="5.4.99.12"/>
    </reaction>
</comment>
<comment type="subunit">
    <text evidence="1">Homodimer.</text>
</comment>
<comment type="similarity">
    <text evidence="1">Belongs to the tRNA pseudouridine synthase TruA family.</text>
</comment>
<dbReference type="EC" id="5.4.99.12" evidence="1"/>
<dbReference type="EMBL" id="FM204883">
    <property type="protein sequence ID" value="CAW95185.1"/>
    <property type="molecule type" value="Genomic_DNA"/>
</dbReference>
<dbReference type="RefSeq" id="WP_012680115.1">
    <property type="nucleotide sequence ID" value="NC_012471.1"/>
</dbReference>
<dbReference type="SMR" id="C0M8L4"/>
<dbReference type="KEGG" id="seu:SEQ_1954"/>
<dbReference type="HOGENOM" id="CLU_014673_0_1_9"/>
<dbReference type="OrthoDB" id="9811823at2"/>
<dbReference type="Proteomes" id="UP000001365">
    <property type="component" value="Chromosome"/>
</dbReference>
<dbReference type="GO" id="GO:0003723">
    <property type="term" value="F:RNA binding"/>
    <property type="evidence" value="ECO:0007669"/>
    <property type="project" value="InterPro"/>
</dbReference>
<dbReference type="GO" id="GO:0160147">
    <property type="term" value="F:tRNA pseudouridine(38-40) synthase activity"/>
    <property type="evidence" value="ECO:0007669"/>
    <property type="project" value="UniProtKB-EC"/>
</dbReference>
<dbReference type="GO" id="GO:0031119">
    <property type="term" value="P:tRNA pseudouridine synthesis"/>
    <property type="evidence" value="ECO:0007669"/>
    <property type="project" value="UniProtKB-UniRule"/>
</dbReference>
<dbReference type="CDD" id="cd02570">
    <property type="entry name" value="PseudoU_synth_EcTruA"/>
    <property type="match status" value="1"/>
</dbReference>
<dbReference type="FunFam" id="3.30.70.580:FF:000001">
    <property type="entry name" value="tRNA pseudouridine synthase A"/>
    <property type="match status" value="1"/>
</dbReference>
<dbReference type="Gene3D" id="3.30.70.660">
    <property type="entry name" value="Pseudouridine synthase I, catalytic domain, C-terminal subdomain"/>
    <property type="match status" value="1"/>
</dbReference>
<dbReference type="Gene3D" id="3.30.70.580">
    <property type="entry name" value="Pseudouridine synthase I, catalytic domain, N-terminal subdomain"/>
    <property type="match status" value="1"/>
</dbReference>
<dbReference type="HAMAP" id="MF_00171">
    <property type="entry name" value="TruA"/>
    <property type="match status" value="1"/>
</dbReference>
<dbReference type="InterPro" id="IPR020103">
    <property type="entry name" value="PsdUridine_synth_cat_dom_sf"/>
</dbReference>
<dbReference type="InterPro" id="IPR001406">
    <property type="entry name" value="PsdUridine_synth_TruA"/>
</dbReference>
<dbReference type="InterPro" id="IPR020097">
    <property type="entry name" value="PsdUridine_synth_TruA_a/b_dom"/>
</dbReference>
<dbReference type="InterPro" id="IPR020095">
    <property type="entry name" value="PsdUridine_synth_TruA_C"/>
</dbReference>
<dbReference type="InterPro" id="IPR020094">
    <property type="entry name" value="TruA/RsuA/RluB/E/F_N"/>
</dbReference>
<dbReference type="NCBIfam" id="TIGR00071">
    <property type="entry name" value="hisT_truA"/>
    <property type="match status" value="1"/>
</dbReference>
<dbReference type="PANTHER" id="PTHR11142">
    <property type="entry name" value="PSEUDOURIDYLATE SYNTHASE"/>
    <property type="match status" value="1"/>
</dbReference>
<dbReference type="PANTHER" id="PTHR11142:SF0">
    <property type="entry name" value="TRNA PSEUDOURIDINE SYNTHASE-LIKE 1"/>
    <property type="match status" value="1"/>
</dbReference>
<dbReference type="Pfam" id="PF01416">
    <property type="entry name" value="PseudoU_synth_1"/>
    <property type="match status" value="2"/>
</dbReference>
<dbReference type="PIRSF" id="PIRSF001430">
    <property type="entry name" value="tRNA_psdUrid_synth"/>
    <property type="match status" value="1"/>
</dbReference>
<dbReference type="SUPFAM" id="SSF55120">
    <property type="entry name" value="Pseudouridine synthase"/>
    <property type="match status" value="1"/>
</dbReference>
<name>TRUA_STRE4</name>
<evidence type="ECO:0000255" key="1">
    <source>
        <dbReference type="HAMAP-Rule" id="MF_00171"/>
    </source>
</evidence>